<reference key="1">
    <citation type="journal article" date="1997" name="Science">
        <title>The complete genome sequence of Escherichia coli K-12.</title>
        <authorList>
            <person name="Blattner F.R."/>
            <person name="Plunkett G. III"/>
            <person name="Bloch C.A."/>
            <person name="Perna N.T."/>
            <person name="Burland V."/>
            <person name="Riley M."/>
            <person name="Collado-Vides J."/>
            <person name="Glasner J.D."/>
            <person name="Rode C.K."/>
            <person name="Mayhew G.F."/>
            <person name="Gregor J."/>
            <person name="Davis N.W."/>
            <person name="Kirkpatrick H.A."/>
            <person name="Goeden M.A."/>
            <person name="Rose D.J."/>
            <person name="Mau B."/>
            <person name="Shao Y."/>
        </authorList>
    </citation>
    <scope>NUCLEOTIDE SEQUENCE [LARGE SCALE GENOMIC DNA]</scope>
    <source>
        <strain>K12 / MG1655 / ATCC 47076</strain>
    </source>
</reference>
<reference key="2">
    <citation type="journal article" date="2006" name="Mol. Syst. Biol.">
        <title>Highly accurate genome sequences of Escherichia coli K-12 strains MG1655 and W3110.</title>
        <authorList>
            <person name="Hayashi K."/>
            <person name="Morooka N."/>
            <person name="Yamamoto Y."/>
            <person name="Fujita K."/>
            <person name="Isono K."/>
            <person name="Choi S."/>
            <person name="Ohtsubo E."/>
            <person name="Baba T."/>
            <person name="Wanner B.L."/>
            <person name="Mori H."/>
            <person name="Horiuchi T."/>
        </authorList>
    </citation>
    <scope>NUCLEOTIDE SEQUENCE [LARGE SCALE GENOMIC DNA]</scope>
    <source>
        <strain>K12 / W3110 / ATCC 27325 / DSM 5911</strain>
    </source>
</reference>
<protein>
    <recommendedName>
        <fullName>Uncharacterized protein YebY</fullName>
    </recommendedName>
</protein>
<sequence length="113" mass="12378">MMKKSILAFLLLTSSAAALAAPQVITVSRFEVGKDKWAFNREEVMLTCRPGNALYVINPSTLVQYPLNDIAQKEVASGKTNAQPISVIQIDDPNNPGEKMSLAPFIERAEKLC</sequence>
<feature type="signal peptide" evidence="1">
    <location>
        <begin position="1"/>
        <end position="20"/>
    </location>
</feature>
<feature type="chain" id="PRO_0000013861" description="Uncharacterized protein YebY">
    <location>
        <begin position="21"/>
        <end position="113"/>
    </location>
</feature>
<feature type="strand" evidence="2">
    <location>
        <begin position="24"/>
        <end position="28"/>
    </location>
</feature>
<feature type="helix" evidence="2">
    <location>
        <begin position="29"/>
        <end position="32"/>
    </location>
</feature>
<feature type="turn" evidence="2">
    <location>
        <begin position="34"/>
        <end position="36"/>
    </location>
</feature>
<feature type="strand" evidence="2">
    <location>
        <begin position="39"/>
        <end position="49"/>
    </location>
</feature>
<feature type="turn" evidence="2">
    <location>
        <begin position="50"/>
        <end position="52"/>
    </location>
</feature>
<feature type="strand" evidence="2">
    <location>
        <begin position="53"/>
        <end position="57"/>
    </location>
</feature>
<feature type="turn" evidence="2">
    <location>
        <begin position="59"/>
        <end position="61"/>
    </location>
</feature>
<feature type="strand" evidence="2">
    <location>
        <begin position="64"/>
        <end position="66"/>
    </location>
</feature>
<feature type="helix" evidence="2">
    <location>
        <begin position="69"/>
        <end position="76"/>
    </location>
</feature>
<feature type="helix" evidence="2">
    <location>
        <begin position="85"/>
        <end position="87"/>
    </location>
</feature>
<feature type="helix" evidence="2">
    <location>
        <begin position="103"/>
        <end position="109"/>
    </location>
</feature>
<feature type="helix" evidence="2">
    <location>
        <begin position="110"/>
        <end position="112"/>
    </location>
</feature>
<evidence type="ECO:0000255" key="1"/>
<evidence type="ECO:0007829" key="2">
    <source>
        <dbReference type="PDB" id="7N0J"/>
    </source>
</evidence>
<organism>
    <name type="scientific">Escherichia coli (strain K12)</name>
    <dbReference type="NCBI Taxonomy" id="83333"/>
    <lineage>
        <taxon>Bacteria</taxon>
        <taxon>Pseudomonadati</taxon>
        <taxon>Pseudomonadota</taxon>
        <taxon>Gammaproteobacteria</taxon>
        <taxon>Enterobacterales</taxon>
        <taxon>Enterobacteriaceae</taxon>
        <taxon>Escherichia</taxon>
    </lineage>
</organism>
<proteinExistence type="evidence at protein level"/>
<keyword id="KW-0002">3D-structure</keyword>
<keyword id="KW-1185">Reference proteome</keyword>
<keyword id="KW-0732">Signal</keyword>
<gene>
    <name type="primary">yebY</name>
    <name type="ordered locus">b1839</name>
    <name type="ordered locus">JW1828</name>
</gene>
<name>YEBY_ECOLI</name>
<accession>P64506</accession>
<accession>P76277</accession>
<accession>Q2MB13</accession>
<dbReference type="EMBL" id="U00096">
    <property type="protein sequence ID" value="AAC74909.1"/>
    <property type="molecule type" value="Genomic_DNA"/>
</dbReference>
<dbReference type="EMBL" id="AP009048">
    <property type="protein sequence ID" value="BAE76543.1"/>
    <property type="molecule type" value="Genomic_DNA"/>
</dbReference>
<dbReference type="PIR" id="G64945">
    <property type="entry name" value="G64945"/>
</dbReference>
<dbReference type="RefSeq" id="NP_416353.1">
    <property type="nucleotide sequence ID" value="NC_000913.3"/>
</dbReference>
<dbReference type="RefSeq" id="WP_000976476.1">
    <property type="nucleotide sequence ID" value="NZ_SSZK01000001.1"/>
</dbReference>
<dbReference type="PDB" id="7N0J">
    <property type="method" value="X-ray"/>
    <property type="resolution" value="1.88 A"/>
    <property type="chains" value="A/B/C/D/E/F/G/H/I/J/K/L=21-113"/>
</dbReference>
<dbReference type="PDBsum" id="7N0J"/>
<dbReference type="SMR" id="P64506"/>
<dbReference type="BioGRID" id="4260358">
    <property type="interactions" value="17"/>
</dbReference>
<dbReference type="DIP" id="DIP-48174N"/>
<dbReference type="FunCoup" id="P64506">
    <property type="interactions" value="23"/>
</dbReference>
<dbReference type="IntAct" id="P64506">
    <property type="interactions" value="7"/>
</dbReference>
<dbReference type="STRING" id="511145.b1839"/>
<dbReference type="jPOST" id="P64506"/>
<dbReference type="PaxDb" id="511145-b1839"/>
<dbReference type="EnsemblBacteria" id="AAC74909">
    <property type="protein sequence ID" value="AAC74909"/>
    <property type="gene ID" value="b1839"/>
</dbReference>
<dbReference type="GeneID" id="947014"/>
<dbReference type="KEGG" id="ecj:JW1828"/>
<dbReference type="KEGG" id="eco:b1839"/>
<dbReference type="PATRIC" id="fig|511145.12.peg.1917"/>
<dbReference type="EchoBASE" id="EB3781"/>
<dbReference type="eggNOG" id="ENOG5032TXR">
    <property type="taxonomic scope" value="Bacteria"/>
</dbReference>
<dbReference type="HOGENOM" id="CLU_164849_1_0_6"/>
<dbReference type="InParanoid" id="P64506"/>
<dbReference type="OMA" id="STLMQYP"/>
<dbReference type="OrthoDB" id="6519165at2"/>
<dbReference type="PhylomeDB" id="P64506"/>
<dbReference type="BioCyc" id="EcoCyc:G7012-MONOMER"/>
<dbReference type="PRO" id="PR:P64506"/>
<dbReference type="Proteomes" id="UP000000625">
    <property type="component" value="Chromosome"/>
</dbReference>
<dbReference type="GO" id="GO:0030288">
    <property type="term" value="C:outer membrane-bounded periplasmic space"/>
    <property type="evidence" value="ECO:0000314"/>
    <property type="project" value="EcoCyc"/>
</dbReference>
<dbReference type="GO" id="GO:0055070">
    <property type="term" value="P:copper ion homeostasis"/>
    <property type="evidence" value="ECO:0000314"/>
    <property type="project" value="EcoCyc"/>
</dbReference>
<dbReference type="InterPro" id="IPR019648">
    <property type="entry name" value="YebY"/>
</dbReference>
<dbReference type="Pfam" id="PF10709">
    <property type="entry name" value="DUF2511"/>
    <property type="match status" value="1"/>
</dbReference>